<feature type="chain" id="PRO_0000397621" description="rRNA biogenesis protein rrp36">
    <location>
        <begin position="1"/>
        <end position="300"/>
    </location>
</feature>
<feature type="region of interest" description="Disordered" evidence="3">
    <location>
        <begin position="1"/>
        <end position="169"/>
    </location>
</feature>
<feature type="region of interest" description="Disordered" evidence="3">
    <location>
        <begin position="280"/>
        <end position="300"/>
    </location>
</feature>
<feature type="coiled-coil region" evidence="2">
    <location>
        <begin position="181"/>
        <end position="244"/>
    </location>
</feature>
<feature type="compositionally biased region" description="Acidic residues" evidence="3">
    <location>
        <begin position="50"/>
        <end position="69"/>
    </location>
</feature>
<feature type="compositionally biased region" description="Basic and acidic residues" evidence="3">
    <location>
        <begin position="112"/>
        <end position="127"/>
    </location>
</feature>
<feature type="compositionally biased region" description="Basic and acidic residues" evidence="3">
    <location>
        <begin position="144"/>
        <end position="161"/>
    </location>
</feature>
<feature type="compositionally biased region" description="Basic and acidic residues" evidence="3">
    <location>
        <begin position="285"/>
        <end position="300"/>
    </location>
</feature>
<protein>
    <recommendedName>
        <fullName>rRNA biogenesis protein rrp36</fullName>
    </recommendedName>
    <alternativeName>
        <fullName>Ribosomal RNA-processing protein 36</fullName>
    </alternativeName>
</protein>
<comment type="function">
    <text evidence="1">Component of the 90S pre-ribosome involved in the maturation of rRNAs. Required for early cleavages of the pre-RNAs in the 40S ribosomal subunit maturation pathway (By similarity).</text>
</comment>
<comment type="subunit">
    <text evidence="1">Associates with 90S and pre-40S pre-ribosomal particles.</text>
</comment>
<comment type="subcellular location">
    <subcellularLocation>
        <location evidence="1">Nucleus</location>
        <location evidence="1">Nucleolus</location>
    </subcellularLocation>
</comment>
<comment type="similarity">
    <text evidence="4">Belongs to the RRP36 family.</text>
</comment>
<keyword id="KW-0175">Coiled coil</keyword>
<keyword id="KW-0539">Nucleus</keyword>
<keyword id="KW-1185">Reference proteome</keyword>
<keyword id="KW-0687">Ribonucleoprotein</keyword>
<keyword id="KW-0690">Ribosome biogenesis</keyword>
<keyword id="KW-0698">rRNA processing</keyword>
<name>RRP36_BOTFB</name>
<accession>A6RKG5</accession>
<accession>A0A384JCP4</accession>
<proteinExistence type="inferred from homology"/>
<reference key="1">
    <citation type="journal article" date="2011" name="PLoS Genet.">
        <title>Genomic analysis of the necrotrophic fungal pathogens Sclerotinia sclerotiorum and Botrytis cinerea.</title>
        <authorList>
            <person name="Amselem J."/>
            <person name="Cuomo C.A."/>
            <person name="van Kan J.A.L."/>
            <person name="Viaud M."/>
            <person name="Benito E.P."/>
            <person name="Couloux A."/>
            <person name="Coutinho P.M."/>
            <person name="de Vries R.P."/>
            <person name="Dyer P.S."/>
            <person name="Fillinger S."/>
            <person name="Fournier E."/>
            <person name="Gout L."/>
            <person name="Hahn M."/>
            <person name="Kohn L."/>
            <person name="Lapalu N."/>
            <person name="Plummer K.M."/>
            <person name="Pradier J.-M."/>
            <person name="Quevillon E."/>
            <person name="Sharon A."/>
            <person name="Simon A."/>
            <person name="ten Have A."/>
            <person name="Tudzynski B."/>
            <person name="Tudzynski P."/>
            <person name="Wincker P."/>
            <person name="Andrew M."/>
            <person name="Anthouard V."/>
            <person name="Beever R.E."/>
            <person name="Beffa R."/>
            <person name="Benoit I."/>
            <person name="Bouzid O."/>
            <person name="Brault B."/>
            <person name="Chen Z."/>
            <person name="Choquer M."/>
            <person name="Collemare J."/>
            <person name="Cotton P."/>
            <person name="Danchin E.G."/>
            <person name="Da Silva C."/>
            <person name="Gautier A."/>
            <person name="Giraud C."/>
            <person name="Giraud T."/>
            <person name="Gonzalez C."/>
            <person name="Grossetete S."/>
            <person name="Gueldener U."/>
            <person name="Henrissat B."/>
            <person name="Howlett B.J."/>
            <person name="Kodira C."/>
            <person name="Kretschmer M."/>
            <person name="Lappartient A."/>
            <person name="Leroch M."/>
            <person name="Levis C."/>
            <person name="Mauceli E."/>
            <person name="Neuveglise C."/>
            <person name="Oeser B."/>
            <person name="Pearson M."/>
            <person name="Poulain J."/>
            <person name="Poussereau N."/>
            <person name="Quesneville H."/>
            <person name="Rascle C."/>
            <person name="Schumacher J."/>
            <person name="Segurens B."/>
            <person name="Sexton A."/>
            <person name="Silva E."/>
            <person name="Sirven C."/>
            <person name="Soanes D.M."/>
            <person name="Talbot N.J."/>
            <person name="Templeton M."/>
            <person name="Yandava C."/>
            <person name="Yarden O."/>
            <person name="Zeng Q."/>
            <person name="Rollins J.A."/>
            <person name="Lebrun M.-H."/>
            <person name="Dickman M."/>
        </authorList>
    </citation>
    <scope>NUCLEOTIDE SEQUENCE [LARGE SCALE GENOMIC DNA]</scope>
    <source>
        <strain>B05.10</strain>
    </source>
</reference>
<reference key="2">
    <citation type="journal article" date="2012" name="Eukaryot. Cell">
        <title>Genome update of Botrytis cinerea strains B05.10 and T4.</title>
        <authorList>
            <person name="Staats M."/>
            <person name="van Kan J.A.L."/>
        </authorList>
    </citation>
    <scope>NUCLEOTIDE SEQUENCE [LARGE SCALE GENOMIC DNA]</scope>
    <scope>GENOME REANNOTATION</scope>
    <source>
        <strain>B05.10</strain>
    </source>
</reference>
<reference key="3">
    <citation type="journal article" date="2017" name="Mol. Plant Pathol.">
        <title>A gapless genome sequence of the fungus Botrytis cinerea.</title>
        <authorList>
            <person name="van Kan J.A.L."/>
            <person name="Stassen J.H.M."/>
            <person name="Mosbach A."/>
            <person name="van der Lee T.A.J."/>
            <person name="Faino L."/>
            <person name="Farmer A.D."/>
            <person name="Papasotiriou D.G."/>
            <person name="Zhou S."/>
            <person name="Seidl M.F."/>
            <person name="Cottam E."/>
            <person name="Edel D."/>
            <person name="Hahn M."/>
            <person name="Schwartz D.C."/>
            <person name="Dietrich R.A."/>
            <person name="Widdison S."/>
            <person name="Scalliet G."/>
        </authorList>
    </citation>
    <scope>NUCLEOTIDE SEQUENCE [LARGE SCALE GENOMIC DNA]</scope>
    <scope>GENOME REANNOTATION</scope>
    <source>
        <strain>B05.10</strain>
    </source>
</reference>
<evidence type="ECO:0000250" key="1"/>
<evidence type="ECO:0000255" key="2"/>
<evidence type="ECO:0000256" key="3">
    <source>
        <dbReference type="SAM" id="MobiDB-lite"/>
    </source>
</evidence>
<evidence type="ECO:0000305" key="4"/>
<dbReference type="EMBL" id="CP009807">
    <property type="protein sequence ID" value="ATZ48369.1"/>
    <property type="molecule type" value="Genomic_DNA"/>
</dbReference>
<dbReference type="SMR" id="A6RKG5"/>
<dbReference type="EnsemblFungi" id="Bcin03g05940.1">
    <property type="protein sequence ID" value="Bcin03p05940.1"/>
    <property type="gene ID" value="Bcin03g05940"/>
</dbReference>
<dbReference type="GeneID" id="5441555"/>
<dbReference type="KEGG" id="bfu:BCIN_03g05940"/>
<dbReference type="VEuPathDB" id="FungiDB:Bcin03g05940"/>
<dbReference type="OMA" id="ERKEMPW"/>
<dbReference type="OrthoDB" id="448446at2759"/>
<dbReference type="Proteomes" id="UP000001798">
    <property type="component" value="Chromosome bcin03"/>
</dbReference>
<dbReference type="GO" id="GO:0030686">
    <property type="term" value="C:90S preribosome"/>
    <property type="evidence" value="ECO:0007669"/>
    <property type="project" value="TreeGrafter"/>
</dbReference>
<dbReference type="GO" id="GO:0005730">
    <property type="term" value="C:nucleolus"/>
    <property type="evidence" value="ECO:0007669"/>
    <property type="project" value="UniProtKB-SubCell"/>
</dbReference>
<dbReference type="GO" id="GO:0000462">
    <property type="term" value="P:maturation of SSU-rRNA from tricistronic rRNA transcript (SSU-rRNA, 5.8S rRNA, LSU-rRNA)"/>
    <property type="evidence" value="ECO:0007669"/>
    <property type="project" value="TreeGrafter"/>
</dbReference>
<dbReference type="InterPro" id="IPR009292">
    <property type="entry name" value="RRP36"/>
</dbReference>
<dbReference type="PANTHER" id="PTHR21738">
    <property type="entry name" value="RIBOSOMAL RNA PROCESSING PROTEIN 36 HOMOLOG"/>
    <property type="match status" value="1"/>
</dbReference>
<dbReference type="PANTHER" id="PTHR21738:SF0">
    <property type="entry name" value="RIBOSOMAL RNA PROCESSING PROTEIN 36 HOMOLOG"/>
    <property type="match status" value="1"/>
</dbReference>
<dbReference type="Pfam" id="PF06102">
    <property type="entry name" value="RRP36"/>
    <property type="match status" value="1"/>
</dbReference>
<sequence length="300" mass="34725">MLSTKRKALDTGLQRRVRARREASEEIEESSSDSAPSETGKNDAEGGSSSDEEVDDDDDEELSESEEEASNGAASISFGALAKAQATMSKPSKRDSKNLKKSNGDGWEDNEATERKAGKKDQRDFTRSSKNAPTEVSSKKAVSRRREVVPVKKREIRDPRFEPTNGPVDMQKIEKNYDFLVDYREDEMKKLKETIRKTKDEDEKEKLKRELLRMESRKKTDARKRKAREVLDKHRKEEKELVKEGKTPYYLKKAEQKKRVLLDTFGELKGRQLDRVIERRRKKVEGKEKKNMPRARRMVD</sequence>
<organism>
    <name type="scientific">Botryotinia fuckeliana (strain B05.10)</name>
    <name type="common">Noble rot fungus</name>
    <name type="synonym">Botrytis cinerea</name>
    <dbReference type="NCBI Taxonomy" id="332648"/>
    <lineage>
        <taxon>Eukaryota</taxon>
        <taxon>Fungi</taxon>
        <taxon>Dikarya</taxon>
        <taxon>Ascomycota</taxon>
        <taxon>Pezizomycotina</taxon>
        <taxon>Leotiomycetes</taxon>
        <taxon>Helotiales</taxon>
        <taxon>Sclerotiniaceae</taxon>
        <taxon>Botrytis</taxon>
    </lineage>
</organism>
<gene>
    <name type="primary">rrp36</name>
    <name type="ORF">BC1G_00937</name>
    <name type="ORF">BCIN_03g05940</name>
</gene>